<reference key="1">
    <citation type="submission" date="2008-04" db="EMBL/GenBank/DDBJ databases">
        <title>Complete sequence of Clostridium botulinum strain Eklund.</title>
        <authorList>
            <person name="Brinkac L.M."/>
            <person name="Brown J.L."/>
            <person name="Bruce D."/>
            <person name="Detter C."/>
            <person name="Munk C."/>
            <person name="Smith L.A."/>
            <person name="Smith T.J."/>
            <person name="Sutton G."/>
            <person name="Brettin T.S."/>
        </authorList>
    </citation>
    <scope>NUCLEOTIDE SEQUENCE [LARGE SCALE GENOMIC DNA]</scope>
    <source>
        <strain>Eklund 17B / Type B</strain>
    </source>
</reference>
<gene>
    <name evidence="1" type="primary">dnaA</name>
    <name type="ordered locus">CLL_A0001</name>
</gene>
<proteinExistence type="inferred from homology"/>
<name>DNAA_CLOBB</name>
<comment type="function">
    <text evidence="1">Plays an essential role in the initiation and regulation of chromosomal replication. ATP-DnaA binds to the origin of replication (oriC) to initiate formation of the DNA replication initiation complex once per cell cycle. Binds the DnaA box (a 9 base pair repeat at the origin) and separates the double-stranded (ds)DNA. Forms a right-handed helical filament on oriC DNA; dsDNA binds to the exterior of the filament while single-stranded (ss)DNA is stabiized in the filament's interior. The ATP-DnaA-oriC complex binds and stabilizes one strand of the AT-rich DNA unwinding element (DUE), permitting loading of DNA polymerase. After initiation quickly degrades to an ADP-DnaA complex that is not apt for DNA replication. Binds acidic phospholipids.</text>
</comment>
<comment type="subunit">
    <text evidence="1">Oligomerizes as a right-handed, spiral filament on DNA at oriC.</text>
</comment>
<comment type="subcellular location">
    <subcellularLocation>
        <location evidence="1">Cytoplasm</location>
    </subcellularLocation>
</comment>
<comment type="domain">
    <text evidence="1">Domain I is involved in oligomerization and binding regulators, domain II is flexibile and of varying length in different bacteria, domain III forms the AAA+ region, while domain IV binds dsDNA.</text>
</comment>
<comment type="similarity">
    <text evidence="1">Belongs to the DnaA family.</text>
</comment>
<keyword id="KW-0067">ATP-binding</keyword>
<keyword id="KW-0963">Cytoplasm</keyword>
<keyword id="KW-0235">DNA replication</keyword>
<keyword id="KW-0238">DNA-binding</keyword>
<keyword id="KW-0446">Lipid-binding</keyword>
<keyword id="KW-0547">Nucleotide-binding</keyword>
<feature type="chain" id="PRO_1000121962" description="Chromosomal replication initiator protein DnaA">
    <location>
        <begin position="1"/>
        <end position="456"/>
    </location>
</feature>
<feature type="region of interest" description="Domain I, interacts with DnaA modulators" evidence="1">
    <location>
        <begin position="1"/>
        <end position="85"/>
    </location>
</feature>
<feature type="region of interest" description="Domain II" evidence="1">
    <location>
        <begin position="85"/>
        <end position="117"/>
    </location>
</feature>
<feature type="region of interest" description="Domain III, AAA+ region" evidence="1">
    <location>
        <begin position="118"/>
        <end position="334"/>
    </location>
</feature>
<feature type="region of interest" description="Domain IV, binds dsDNA" evidence="1">
    <location>
        <begin position="335"/>
        <end position="456"/>
    </location>
</feature>
<feature type="binding site" evidence="1">
    <location>
        <position position="162"/>
    </location>
    <ligand>
        <name>ATP</name>
        <dbReference type="ChEBI" id="CHEBI:30616"/>
    </ligand>
</feature>
<feature type="binding site" evidence="1">
    <location>
        <position position="164"/>
    </location>
    <ligand>
        <name>ATP</name>
        <dbReference type="ChEBI" id="CHEBI:30616"/>
    </ligand>
</feature>
<feature type="binding site" evidence="1">
    <location>
        <position position="165"/>
    </location>
    <ligand>
        <name>ATP</name>
        <dbReference type="ChEBI" id="CHEBI:30616"/>
    </ligand>
</feature>
<feature type="binding site" evidence="1">
    <location>
        <position position="166"/>
    </location>
    <ligand>
        <name>ATP</name>
        <dbReference type="ChEBI" id="CHEBI:30616"/>
    </ligand>
</feature>
<dbReference type="EMBL" id="CP001056">
    <property type="protein sequence ID" value="ACD25095.1"/>
    <property type="molecule type" value="Genomic_DNA"/>
</dbReference>
<dbReference type="SMR" id="B2THB4"/>
<dbReference type="KEGG" id="cbk:CLL_A0001"/>
<dbReference type="PATRIC" id="fig|935198.13.peg.1"/>
<dbReference type="HOGENOM" id="CLU_026910_3_1_9"/>
<dbReference type="Proteomes" id="UP000001195">
    <property type="component" value="Chromosome"/>
</dbReference>
<dbReference type="GO" id="GO:0005737">
    <property type="term" value="C:cytoplasm"/>
    <property type="evidence" value="ECO:0007669"/>
    <property type="project" value="UniProtKB-SubCell"/>
</dbReference>
<dbReference type="GO" id="GO:0005886">
    <property type="term" value="C:plasma membrane"/>
    <property type="evidence" value="ECO:0007669"/>
    <property type="project" value="TreeGrafter"/>
</dbReference>
<dbReference type="GO" id="GO:0005524">
    <property type="term" value="F:ATP binding"/>
    <property type="evidence" value="ECO:0007669"/>
    <property type="project" value="UniProtKB-UniRule"/>
</dbReference>
<dbReference type="GO" id="GO:0016887">
    <property type="term" value="F:ATP hydrolysis activity"/>
    <property type="evidence" value="ECO:0007669"/>
    <property type="project" value="InterPro"/>
</dbReference>
<dbReference type="GO" id="GO:0003688">
    <property type="term" value="F:DNA replication origin binding"/>
    <property type="evidence" value="ECO:0007669"/>
    <property type="project" value="UniProtKB-UniRule"/>
</dbReference>
<dbReference type="GO" id="GO:0008289">
    <property type="term" value="F:lipid binding"/>
    <property type="evidence" value="ECO:0007669"/>
    <property type="project" value="UniProtKB-KW"/>
</dbReference>
<dbReference type="GO" id="GO:0006270">
    <property type="term" value="P:DNA replication initiation"/>
    <property type="evidence" value="ECO:0007669"/>
    <property type="project" value="UniProtKB-UniRule"/>
</dbReference>
<dbReference type="GO" id="GO:0006275">
    <property type="term" value="P:regulation of DNA replication"/>
    <property type="evidence" value="ECO:0007669"/>
    <property type="project" value="UniProtKB-UniRule"/>
</dbReference>
<dbReference type="CDD" id="cd00009">
    <property type="entry name" value="AAA"/>
    <property type="match status" value="1"/>
</dbReference>
<dbReference type="CDD" id="cd06571">
    <property type="entry name" value="Bac_DnaA_C"/>
    <property type="match status" value="1"/>
</dbReference>
<dbReference type="FunFam" id="1.10.1750.10:FF:000003">
    <property type="entry name" value="Chromosomal replication initiator protein DnaA"/>
    <property type="match status" value="1"/>
</dbReference>
<dbReference type="FunFam" id="1.10.8.60:FF:000003">
    <property type="entry name" value="Chromosomal replication initiator protein DnaA"/>
    <property type="match status" value="1"/>
</dbReference>
<dbReference type="FunFam" id="3.40.50.300:FF:000150">
    <property type="entry name" value="Chromosomal replication initiator protein DnaA"/>
    <property type="match status" value="1"/>
</dbReference>
<dbReference type="Gene3D" id="1.10.1750.10">
    <property type="match status" value="1"/>
</dbReference>
<dbReference type="Gene3D" id="1.10.8.60">
    <property type="match status" value="1"/>
</dbReference>
<dbReference type="Gene3D" id="3.30.300.180">
    <property type="match status" value="1"/>
</dbReference>
<dbReference type="Gene3D" id="3.40.50.300">
    <property type="entry name" value="P-loop containing nucleotide triphosphate hydrolases"/>
    <property type="match status" value="1"/>
</dbReference>
<dbReference type="HAMAP" id="MF_00377">
    <property type="entry name" value="DnaA_bact"/>
    <property type="match status" value="1"/>
</dbReference>
<dbReference type="InterPro" id="IPR003593">
    <property type="entry name" value="AAA+_ATPase"/>
</dbReference>
<dbReference type="InterPro" id="IPR001957">
    <property type="entry name" value="Chromosome_initiator_DnaA"/>
</dbReference>
<dbReference type="InterPro" id="IPR020591">
    <property type="entry name" value="Chromosome_initiator_DnaA-like"/>
</dbReference>
<dbReference type="InterPro" id="IPR018312">
    <property type="entry name" value="Chromosome_initiator_DnaA_CS"/>
</dbReference>
<dbReference type="InterPro" id="IPR013159">
    <property type="entry name" value="DnaA_C"/>
</dbReference>
<dbReference type="InterPro" id="IPR013317">
    <property type="entry name" value="DnaA_dom"/>
</dbReference>
<dbReference type="InterPro" id="IPR024633">
    <property type="entry name" value="DnaA_N_dom"/>
</dbReference>
<dbReference type="InterPro" id="IPR038454">
    <property type="entry name" value="DnaA_N_sf"/>
</dbReference>
<dbReference type="InterPro" id="IPR027417">
    <property type="entry name" value="P-loop_NTPase"/>
</dbReference>
<dbReference type="InterPro" id="IPR010921">
    <property type="entry name" value="Trp_repressor/repl_initiator"/>
</dbReference>
<dbReference type="NCBIfam" id="TIGR00362">
    <property type="entry name" value="DnaA"/>
    <property type="match status" value="1"/>
</dbReference>
<dbReference type="NCBIfam" id="NF010686">
    <property type="entry name" value="PRK14086.1"/>
    <property type="match status" value="1"/>
</dbReference>
<dbReference type="PANTHER" id="PTHR30050">
    <property type="entry name" value="CHROMOSOMAL REPLICATION INITIATOR PROTEIN DNAA"/>
    <property type="match status" value="1"/>
</dbReference>
<dbReference type="PANTHER" id="PTHR30050:SF2">
    <property type="entry name" value="CHROMOSOMAL REPLICATION INITIATOR PROTEIN DNAA"/>
    <property type="match status" value="1"/>
</dbReference>
<dbReference type="Pfam" id="PF00308">
    <property type="entry name" value="Bac_DnaA"/>
    <property type="match status" value="1"/>
</dbReference>
<dbReference type="Pfam" id="PF08299">
    <property type="entry name" value="Bac_DnaA_C"/>
    <property type="match status" value="1"/>
</dbReference>
<dbReference type="Pfam" id="PF11638">
    <property type="entry name" value="DnaA_N"/>
    <property type="match status" value="1"/>
</dbReference>
<dbReference type="PRINTS" id="PR00051">
    <property type="entry name" value="DNAA"/>
</dbReference>
<dbReference type="SMART" id="SM00382">
    <property type="entry name" value="AAA"/>
    <property type="match status" value="1"/>
</dbReference>
<dbReference type="SMART" id="SM00760">
    <property type="entry name" value="Bac_DnaA_C"/>
    <property type="match status" value="1"/>
</dbReference>
<dbReference type="SUPFAM" id="SSF52540">
    <property type="entry name" value="P-loop containing nucleoside triphosphate hydrolases"/>
    <property type="match status" value="1"/>
</dbReference>
<dbReference type="SUPFAM" id="SSF48295">
    <property type="entry name" value="TrpR-like"/>
    <property type="match status" value="1"/>
</dbReference>
<dbReference type="PROSITE" id="PS01008">
    <property type="entry name" value="DNAA"/>
    <property type="match status" value="1"/>
</dbReference>
<evidence type="ECO:0000255" key="1">
    <source>
        <dbReference type="HAMAP-Rule" id="MF_00377"/>
    </source>
</evidence>
<organism>
    <name type="scientific">Clostridium botulinum (strain Eklund 17B / Type B)</name>
    <dbReference type="NCBI Taxonomy" id="935198"/>
    <lineage>
        <taxon>Bacteria</taxon>
        <taxon>Bacillati</taxon>
        <taxon>Bacillota</taxon>
        <taxon>Clostridia</taxon>
        <taxon>Eubacteriales</taxon>
        <taxon>Clostridiaceae</taxon>
        <taxon>Clostridium</taxon>
    </lineage>
</organism>
<accession>B2THB4</accession>
<protein>
    <recommendedName>
        <fullName evidence="1">Chromosomal replication initiator protein DnaA</fullName>
    </recommendedName>
</protein>
<sequence length="456" mass="51990">MDADLNKLWEKTLNIVKSEMSEVSFNTWIKSCEPISISDTSIKISVPNSFTKDILDKRYKSLVANSIEAVCSKLYEIKFIIESDLNNEDELNNSDNSDKNRDKNSRRNIVVNDEMSSTLNPKYTFNSFVIGNSNRFAHAASLAVAEAPAKAYNPLFIYGGVGLGKTHLMHAIGHYILQNNTKAKVVYVSSEKFTNELINAIKDDKNEEFRKKYRNVDVLLIDDIQFIAGKERTQEEFFHTFNELHDANKQIILSSDRPPKEIPTLEDRLRSRFEWGLIADIQVPDFETRMAILKKKADVENLKVANEVMGYIATKIKSNIRELEGALIRIIAYSSLTNREVTVDLASEALKDIISKKQGKHVTIPSIQEIVANYFNLKIDDLKSQRRTRNVAYPRQIAMYLSRKLTDMSLPKIGEEFGGRDHTTVIHAYEKISENLKSDESLQHTVSDITKKVSQN</sequence>